<accession>Q5KS41</accession>
<accession>Q8GXG7</accession>
<accession>Q9FK03</accession>
<comment type="function">
    <text evidence="1 3 4">Bifunctional wax ester synthase/diacylglycerol acyltransferase (By similarity). Involved in cuticular wax biosynthesis (By similarity). Required for petals development, probably by mediating the production of fatty acids at the plasma membrane in the petal epidermis acting as lubricants that makes petal elongation smooth in narrow space between the sepals and the anthers inside floral buds (PubMed:23314942, PubMed:27135508).</text>
</comment>
<comment type="catalytic activity">
    <reaction evidence="1">
        <text>an acyl-CoA + a 1,2-diacyl-sn-glycerol = a triacyl-sn-glycerol + CoA</text>
        <dbReference type="Rhea" id="RHEA:10868"/>
        <dbReference type="ChEBI" id="CHEBI:17815"/>
        <dbReference type="ChEBI" id="CHEBI:57287"/>
        <dbReference type="ChEBI" id="CHEBI:58342"/>
        <dbReference type="ChEBI" id="CHEBI:64615"/>
        <dbReference type="EC" id="2.3.1.20"/>
    </reaction>
</comment>
<comment type="catalytic activity">
    <reaction evidence="1">
        <text>a long chain fatty alcohol + a fatty acyl-CoA = a wax ester + CoA</text>
        <dbReference type="Rhea" id="RHEA:38443"/>
        <dbReference type="ChEBI" id="CHEBI:10036"/>
        <dbReference type="ChEBI" id="CHEBI:17135"/>
        <dbReference type="ChEBI" id="CHEBI:57287"/>
        <dbReference type="ChEBI" id="CHEBI:77636"/>
        <dbReference type="EC" id="2.3.1.75"/>
    </reaction>
</comment>
<comment type="pathway">
    <text evidence="1">Glycerolipid metabolism; triacylglycerol biosynthesis.</text>
</comment>
<comment type="pathway">
    <text evidence="1">Lipid metabolism.</text>
</comment>
<comment type="subcellular location">
    <subcellularLocation>
        <location evidence="3">Cell membrane</location>
        <topology evidence="2">Single-pass membrane protein</topology>
    </subcellularLocation>
    <subcellularLocation>
        <location evidence="1">Endoplasmic reticulum membrane</location>
        <topology evidence="2">Single-pass membrane protein</topology>
    </subcellularLocation>
</comment>
<comment type="tissue specificity">
    <text evidence="3 5">Mostly expressed in inflorescences and flowers, especially at the periphery of petal epidermal cells.</text>
</comment>
<comment type="developmental stage">
    <text evidence="3">First observed in sepal primordia and floral meristems (PubMed:23314942). High levels in petal primordia and elongating petals margins but weak expression in the other floral organs (PubMed:23314942). In mature flowers, accumulates in the marginal region of petals and in ovules (PubMed:23314942).</text>
</comment>
<comment type="disruption phenotype">
    <text evidence="3 4">Disturbed petal development during their growth through the narrow space between sepals and anthers, leading to stuck petals in the bud during elongation, and resulting in the formation of folded petals in the open flower (PubMed:23314942, PubMed:27135508). Flattened conical-shaped petal epidermal cells associated with abnormal contacts of petals with the sepal surface (PubMed:23314942).</text>
</comment>
<comment type="similarity">
    <text evidence="8">In the N-terminal section; belongs to the long-chain O-acyltransferase family.</text>
</comment>
<comment type="sequence caution" evidence="8">
    <conflict type="erroneous gene model prediction">
        <sequence resource="EMBL-CDS" id="BAB09801"/>
    </conflict>
</comment>
<evidence type="ECO:0000250" key="1">
    <source>
        <dbReference type="UniProtKB" id="Q93ZR6"/>
    </source>
</evidence>
<evidence type="ECO:0000255" key="2"/>
<evidence type="ECO:0000269" key="3">
    <source>
    </source>
</evidence>
<evidence type="ECO:0000269" key="4">
    <source>
    </source>
</evidence>
<evidence type="ECO:0000269" key="5">
    <source>
    </source>
</evidence>
<evidence type="ECO:0000303" key="6">
    <source>
    </source>
</evidence>
<evidence type="ECO:0000303" key="7">
    <source>
    </source>
</evidence>
<evidence type="ECO:0000305" key="8"/>
<evidence type="ECO:0000312" key="9">
    <source>
        <dbReference type="EMBL" id="AED96347.1"/>
    </source>
</evidence>
<sequence length="486" mass="54849">MGEDKKTARETVEEEPLSPCSRLFNSPDFNCAIIVTMGSKVKGDTPAIIHGLEHTLVNHPRFSSILEMNNGKKPRWVRTKVKVEEHVIVPDVDPDIENPDQYLEDYISKLTTIPMDLSKPLWEMHLLGVKTSNAESYAILKIHHSLGDGMSLMSLLLACTRKTSDPEALPTVAVHKKRFGPSCNSGFFNKIWWLFVGLWFILRLLFNTFVDILMFALTIFVLRDTETPLLAKPGSELIPKRFVHRIISFDDVKLVKNAMKMTVNDVLLGVTQAGLSRYLSRKYDQEATPKSKESMRRIRLRSAIMINLRPNAGIEALADMMAKKSKCRWGNLFGYILLPFSVGLETDPLEYVRQAKATIDRKKHSLEAVFSMAFFKLILKVLGLKASVVLVRKVIHSTTLSFSNVVGPKEEITFHGHPLNYISPCVFGHPHALTLHFQTYANKVIISVTADPTVIPDPHKMCDDLVESLKMIKAAVLERGLYEIEV</sequence>
<dbReference type="EC" id="2.3.1.20" evidence="1"/>
<dbReference type="EC" id="2.3.1.75" evidence="1"/>
<dbReference type="EMBL" id="AB189175">
    <property type="protein sequence ID" value="BAD83884.1"/>
    <property type="molecule type" value="mRNA"/>
</dbReference>
<dbReference type="EMBL" id="AB013388">
    <property type="protein sequence ID" value="BAB09801.1"/>
    <property type="status" value="ALT_SEQ"/>
    <property type="molecule type" value="Genomic_DNA"/>
</dbReference>
<dbReference type="EMBL" id="CP002688">
    <property type="protein sequence ID" value="AED96347.1"/>
    <property type="molecule type" value="Genomic_DNA"/>
</dbReference>
<dbReference type="EMBL" id="AK118253">
    <property type="protein sequence ID" value="BAC42871.1"/>
    <property type="molecule type" value="mRNA"/>
</dbReference>
<dbReference type="RefSeq" id="NP_200151.2">
    <property type="nucleotide sequence ID" value="NM_124718.4"/>
</dbReference>
<dbReference type="SMR" id="Q5KS41"/>
<dbReference type="IntAct" id="Q5KS41">
    <property type="interactions" value="6"/>
</dbReference>
<dbReference type="STRING" id="3702.Q5KS41"/>
<dbReference type="iPTMnet" id="Q5KS41"/>
<dbReference type="PaxDb" id="3702-AT5G53390.1"/>
<dbReference type="ProteomicsDB" id="182957"/>
<dbReference type="EnsemblPlants" id="AT5G53390.1">
    <property type="protein sequence ID" value="AT5G53390.1"/>
    <property type="gene ID" value="AT5G53390"/>
</dbReference>
<dbReference type="GeneID" id="835420"/>
<dbReference type="Gramene" id="AT5G53390.1">
    <property type="protein sequence ID" value="AT5G53390.1"/>
    <property type="gene ID" value="AT5G53390"/>
</dbReference>
<dbReference type="KEGG" id="ath:AT5G53390"/>
<dbReference type="Araport" id="AT5G53390"/>
<dbReference type="TAIR" id="AT5G53390">
    <property type="gene designation" value="FOP1"/>
</dbReference>
<dbReference type="eggNOG" id="ENOG502QTZ2">
    <property type="taxonomic scope" value="Eukaryota"/>
</dbReference>
<dbReference type="HOGENOM" id="CLU_027831_0_0_1"/>
<dbReference type="InParanoid" id="Q5KS41"/>
<dbReference type="OMA" id="PSWVRTK"/>
<dbReference type="OrthoDB" id="619536at2759"/>
<dbReference type="PhylomeDB" id="Q5KS41"/>
<dbReference type="UniPathway" id="UPA00282"/>
<dbReference type="PRO" id="PR:Q5KS41"/>
<dbReference type="Proteomes" id="UP000006548">
    <property type="component" value="Chromosome 5"/>
</dbReference>
<dbReference type="ExpressionAtlas" id="Q5KS41">
    <property type="expression patterns" value="baseline and differential"/>
</dbReference>
<dbReference type="GO" id="GO:0005789">
    <property type="term" value="C:endoplasmic reticulum membrane"/>
    <property type="evidence" value="ECO:0007669"/>
    <property type="project" value="UniProtKB-SubCell"/>
</dbReference>
<dbReference type="GO" id="GO:0005886">
    <property type="term" value="C:plasma membrane"/>
    <property type="evidence" value="ECO:0000314"/>
    <property type="project" value="TAIR"/>
</dbReference>
<dbReference type="GO" id="GO:0004144">
    <property type="term" value="F:diacylglycerol O-acyltransferase activity"/>
    <property type="evidence" value="ECO:0007669"/>
    <property type="project" value="UniProtKB-EC"/>
</dbReference>
<dbReference type="GO" id="GO:0047196">
    <property type="term" value="F:long-chain-alcohol O-fatty-acyltransferase activity"/>
    <property type="evidence" value="ECO:0007669"/>
    <property type="project" value="UniProtKB-EC"/>
</dbReference>
<dbReference type="GO" id="GO:0048441">
    <property type="term" value="P:petal development"/>
    <property type="evidence" value="ECO:0000315"/>
    <property type="project" value="UniProtKB"/>
</dbReference>
<dbReference type="GO" id="GO:0048446">
    <property type="term" value="P:petal morphogenesis"/>
    <property type="evidence" value="ECO:0000315"/>
    <property type="project" value="TAIR"/>
</dbReference>
<dbReference type="GO" id="GO:0019432">
    <property type="term" value="P:triglyceride biosynthetic process"/>
    <property type="evidence" value="ECO:0007669"/>
    <property type="project" value="UniProtKB-UniPathway"/>
</dbReference>
<dbReference type="FunFam" id="3.30.559.10:FF:000033">
    <property type="entry name" value="O-acyltransferase (WSD1-like) family protein"/>
    <property type="match status" value="1"/>
</dbReference>
<dbReference type="Gene3D" id="3.30.559.10">
    <property type="entry name" value="Chloramphenicol acetyltransferase-like domain"/>
    <property type="match status" value="1"/>
</dbReference>
<dbReference type="InterPro" id="IPR023213">
    <property type="entry name" value="CAT-like_dom_sf"/>
</dbReference>
<dbReference type="InterPro" id="IPR045034">
    <property type="entry name" value="O-acyltransferase_WSD1-like"/>
</dbReference>
<dbReference type="InterPro" id="IPR009721">
    <property type="entry name" value="O-acyltransferase_WSD1_C"/>
</dbReference>
<dbReference type="InterPro" id="IPR004255">
    <property type="entry name" value="O-acyltransferase_WSD1_N"/>
</dbReference>
<dbReference type="PANTHER" id="PTHR31650">
    <property type="entry name" value="O-ACYLTRANSFERASE (WSD1-LIKE) FAMILY PROTEIN"/>
    <property type="match status" value="1"/>
</dbReference>
<dbReference type="PANTHER" id="PTHR31650:SF35">
    <property type="entry name" value="WAX ESTER SYNTHASE_DIACYLGLYCEROL ACYLTRANSFERASE 11"/>
    <property type="match status" value="1"/>
</dbReference>
<dbReference type="Pfam" id="PF06974">
    <property type="entry name" value="WS_DGAT_C"/>
    <property type="match status" value="1"/>
</dbReference>
<dbReference type="Pfam" id="PF03007">
    <property type="entry name" value="WS_DGAT_cat"/>
    <property type="match status" value="1"/>
</dbReference>
<dbReference type="SUPFAM" id="SSF52777">
    <property type="entry name" value="CoA-dependent acyltransferases"/>
    <property type="match status" value="1"/>
</dbReference>
<gene>
    <name evidence="6" type="primary">WSD11</name>
    <name evidence="7" type="synonym">FOP1</name>
    <name evidence="9" type="ordered locus">At5g53390</name>
    <name evidence="9" type="ORF">K19E1.19</name>
</gene>
<reference key="1">
    <citation type="journal article" date="2014" name="Plants (Basel)">
        <title>The half-Size ABC transporter FOLDED PETALS 2/ABCG13 is involved in petal elongation through narrow spaces in Arabidopsis thaliana floral buds.</title>
        <authorList>
            <person name="Takeda S."/>
            <person name="Iwasaki A."/>
            <person name="Tatematsu K."/>
            <person name="Okada K."/>
        </authorList>
    </citation>
    <scope>NUCLEOTIDE SEQUENCE [MRNA]</scope>
    <scope>FUNCTION</scope>
    <scope>DISRUPTION PHENOTYPE</scope>
    <source>
        <strain>cv. Columbia</strain>
        <strain>cv. Landsberg erecta</strain>
        <strain>cv. Wassilewskija</strain>
    </source>
</reference>
<reference key="2">
    <citation type="journal article" date="1998" name="DNA Res.">
        <title>Structural analysis of Arabidopsis thaliana chromosome 5. VI. Sequence features of the regions of 1,367,185 bp covered by 19 physically assigned P1 and TAC clones.</title>
        <authorList>
            <person name="Kotani H."/>
            <person name="Nakamura Y."/>
            <person name="Sato S."/>
            <person name="Asamizu E."/>
            <person name="Kaneko T."/>
            <person name="Miyajima N."/>
            <person name="Tabata S."/>
        </authorList>
    </citation>
    <scope>NUCLEOTIDE SEQUENCE [LARGE SCALE GENOMIC DNA]</scope>
    <source>
        <strain>cv. Columbia</strain>
    </source>
</reference>
<reference key="3">
    <citation type="journal article" date="2017" name="Plant J.">
        <title>Araport11: a complete reannotation of the Arabidopsis thaliana reference genome.</title>
        <authorList>
            <person name="Cheng C.Y."/>
            <person name="Krishnakumar V."/>
            <person name="Chan A.P."/>
            <person name="Thibaud-Nissen F."/>
            <person name="Schobel S."/>
            <person name="Town C.D."/>
        </authorList>
    </citation>
    <scope>GENOME REANNOTATION</scope>
    <source>
        <strain>cv. Columbia</strain>
    </source>
</reference>
<reference key="4">
    <citation type="journal article" date="2002" name="Science">
        <title>Functional annotation of a full-length Arabidopsis cDNA collection.</title>
        <authorList>
            <person name="Seki M."/>
            <person name="Narusaka M."/>
            <person name="Kamiya A."/>
            <person name="Ishida J."/>
            <person name="Satou M."/>
            <person name="Sakurai T."/>
            <person name="Nakajima M."/>
            <person name="Enju A."/>
            <person name="Akiyama K."/>
            <person name="Oono Y."/>
            <person name="Muramatsu M."/>
            <person name="Hayashizaki Y."/>
            <person name="Kawai J."/>
            <person name="Carninci P."/>
            <person name="Itoh M."/>
            <person name="Ishii Y."/>
            <person name="Arakawa T."/>
            <person name="Shibata K."/>
            <person name="Shinagawa A."/>
            <person name="Shinozaki K."/>
        </authorList>
    </citation>
    <scope>NUCLEOTIDE SEQUENCE [LARGE SCALE MRNA]</scope>
    <source>
        <strain>cv. Columbia</strain>
    </source>
</reference>
<reference key="5">
    <citation type="journal article" date="2003" name="J. Biol. Chem.">
        <title>A novel bifunctional wax ester synthase/acyl-CoA:diacylglycerol acyltransferase mediates wax ester and triacylglycerol biosynthesis in Acinetobacter calcoaceticus ADP1.</title>
        <authorList>
            <person name="Kalscheuer R."/>
            <person name="Steinbuchel A."/>
        </authorList>
    </citation>
    <scope>GENE FAMILY</scope>
</reference>
<reference key="6">
    <citation type="journal article" date="2008" name="Plant Physiol.">
        <title>Identification of the wax ester synthase/acyl-coenzyme A: diacylglycerol acyltransferase WSD1 required for stem wax ester biosynthesis in Arabidopsis.</title>
        <authorList>
            <person name="Li F."/>
            <person name="Wu X."/>
            <person name="Lam P."/>
            <person name="Bird D."/>
            <person name="Zheng H."/>
            <person name="Samuels A.L."/>
            <person name="Jetter R."/>
            <person name="Kunst L."/>
        </authorList>
    </citation>
    <scope>GENE FAMILY</scope>
    <scope>NOMENCLATURE</scope>
</reference>
<reference key="7">
    <citation type="journal article" date="2013" name="Arabidopsis Book">
        <title>Acyl-lipid metabolism.</title>
        <authorList>
            <person name="Li-Beisson Y."/>
            <person name="Shorrosh B."/>
            <person name="Beisson F."/>
            <person name="Andersson M.X."/>
            <person name="Arondel V."/>
            <person name="Bates P.D."/>
            <person name="Baud S."/>
            <person name="Bird D."/>
            <person name="Debono A."/>
            <person name="Durrett T.P."/>
            <person name="Franke R.B."/>
            <person name="Graham I.A."/>
            <person name="Katayama K."/>
            <person name="Kelly A.A."/>
            <person name="Larson T."/>
            <person name="Markham J.E."/>
            <person name="Miquel M."/>
            <person name="Molina I."/>
            <person name="Nishida I."/>
            <person name="Rowland O."/>
            <person name="Samuels L."/>
            <person name="Schmid K.M."/>
            <person name="Wada H."/>
            <person name="Welti R."/>
            <person name="Xu C."/>
            <person name="Zallot R."/>
            <person name="Ohlrogge J."/>
        </authorList>
    </citation>
    <scope>REVIEW ON ACYL-LIPID METABOLISM</scope>
</reference>
<reference key="8">
    <citation type="journal article" date="2013" name="Plant Physiol.">
        <title>Physical interaction of floral organs controls petal morphogenesis in Arabidopsis.</title>
        <authorList>
            <person name="Takeda S."/>
            <person name="Iwasaki A."/>
            <person name="Matsumoto N."/>
            <person name="Uemura T."/>
            <person name="Tatematsu K."/>
            <person name="Okada K."/>
        </authorList>
    </citation>
    <scope>FUNCTION</scope>
    <scope>MUTAGENESIS OF GLY-274</scope>
    <scope>DISRUPTION PHENOTYPE</scope>
    <scope>TISSUE SPECIFICITY</scope>
    <scope>DEVELOPMENTAL STAGE</scope>
    <scope>SUBCELLULAR LOCATION</scope>
</reference>
<reference key="9">
    <citation type="journal article" date="2019" name="Plant J.">
        <title>Surface wax esters contribute to drought tolerance in Arabidopsis.</title>
        <authorList>
            <person name="Patwari P."/>
            <person name="Salewski V."/>
            <person name="Gutbrod K."/>
            <person name="Kreszies T."/>
            <person name="Dresen-Scholz B."/>
            <person name="Peisker H."/>
            <person name="Steiner U."/>
            <person name="Meyer A.J."/>
            <person name="Schreiber L."/>
            <person name="Doermann P."/>
        </authorList>
    </citation>
    <scope>TISSUE SPECIFICITY</scope>
    <source>
        <strain>cv. Columbia</strain>
    </source>
</reference>
<protein>
    <recommendedName>
        <fullName evidence="6">Wax ester synthase/diacylglycerol acyltransferase 11</fullName>
        <shortName evidence="6">WS/DGAT 11</shortName>
    </recommendedName>
    <alternativeName>
        <fullName evidence="6">Diacylglycerol O-acyltransferase WSD11</fullName>
        <ecNumber evidence="1">2.3.1.20</ecNumber>
    </alternativeName>
    <alternativeName>
        <fullName evidence="6">Long-chain-alcohol O-fatty-acyltransferase WSD11</fullName>
        <ecNumber evidence="1">2.3.1.75</ecNumber>
    </alternativeName>
    <alternativeName>
        <fullName evidence="7">Protein FOLDED PETALS 1</fullName>
    </alternativeName>
</protein>
<proteinExistence type="evidence at protein level"/>
<feature type="chain" id="PRO_0000452621" description="Wax ester synthase/diacylglycerol acyltransferase 11">
    <location>
        <begin position="1"/>
        <end position="486"/>
    </location>
</feature>
<feature type="topological domain" description="Cytoplasmic" evidence="8">
    <location>
        <begin position="1"/>
        <end position="192"/>
    </location>
</feature>
<feature type="transmembrane region" description="Helical" evidence="2">
    <location>
        <begin position="193"/>
        <end position="213"/>
    </location>
</feature>
<feature type="topological domain" description="Extracellular" evidence="8">
    <location>
        <begin position="214"/>
        <end position="486"/>
    </location>
</feature>
<feature type="active site" description="Proton acceptor" evidence="2">
    <location>
        <position position="144"/>
    </location>
</feature>
<feature type="mutagenesis site" description="In fop1-1; disturbed petal development due to stuck petals in the bud during elongation, and resulting in the formation of folded petals in the open flower." evidence="3">
    <original>G</original>
    <variation>R</variation>
    <location>
        <position position="274"/>
    </location>
</feature>
<feature type="sequence conflict" description="In Ref. 4; BAC42871." evidence="8" ref="4">
    <original>N</original>
    <variation>S</variation>
    <location>
        <position position="133"/>
    </location>
</feature>
<organism>
    <name type="scientific">Arabidopsis thaliana</name>
    <name type="common">Mouse-ear cress</name>
    <dbReference type="NCBI Taxonomy" id="3702"/>
    <lineage>
        <taxon>Eukaryota</taxon>
        <taxon>Viridiplantae</taxon>
        <taxon>Streptophyta</taxon>
        <taxon>Embryophyta</taxon>
        <taxon>Tracheophyta</taxon>
        <taxon>Spermatophyta</taxon>
        <taxon>Magnoliopsida</taxon>
        <taxon>eudicotyledons</taxon>
        <taxon>Gunneridae</taxon>
        <taxon>Pentapetalae</taxon>
        <taxon>rosids</taxon>
        <taxon>malvids</taxon>
        <taxon>Brassicales</taxon>
        <taxon>Brassicaceae</taxon>
        <taxon>Camelineae</taxon>
        <taxon>Arabidopsis</taxon>
    </lineage>
</organism>
<keyword id="KW-0012">Acyltransferase</keyword>
<keyword id="KW-1003">Cell membrane</keyword>
<keyword id="KW-0256">Endoplasmic reticulum</keyword>
<keyword id="KW-0472">Membrane</keyword>
<keyword id="KW-1185">Reference proteome</keyword>
<keyword id="KW-0808">Transferase</keyword>
<keyword id="KW-0812">Transmembrane</keyword>
<keyword id="KW-1133">Transmembrane helix</keyword>
<name>WSD11_ARATH</name>